<feature type="chain" id="PRO_0000219199" description="Protein hook">
    <location>
        <begin position="1"/>
        <end position="679"/>
    </location>
</feature>
<feature type="domain" description="Calponin-homology (CH)" evidence="3">
    <location>
        <begin position="6"/>
        <end position="123"/>
    </location>
</feature>
<feature type="region of interest" description="Interaction with microtubules" evidence="1">
    <location>
        <begin position="1"/>
        <end position="155"/>
    </location>
</feature>
<feature type="coiled-coil region" evidence="2">
    <location>
        <begin position="135"/>
        <end position="437"/>
    </location>
</feature>
<feature type="coiled-coil region" evidence="2">
    <location>
        <begin position="480"/>
        <end position="574"/>
    </location>
</feature>
<feature type="sequence conflict" description="In Ref. 1 and 2." evidence="10" ref="1 2">
    <original>E</original>
    <variation>K</variation>
    <location>
        <position position="273"/>
    </location>
</feature>
<reference key="1">
    <citation type="journal article" date="1996" name="J. Cell Biol.">
        <title>Mutations in the Drosophila hook gene inhibit endocytosis of the boss transmembrane ligand into multivesicular bodies.</title>
        <authorList>
            <person name="Kraemer H."/>
            <person name="Phistry M."/>
        </authorList>
    </citation>
    <scope>NUCLEOTIDE SEQUENCE [MRNA]</scope>
    <scope>FUNCTION</scope>
    <scope>SUBCELLULAR LOCATION</scope>
    <scope>DOMAIN</scope>
    <scope>HOMODIMERIZATION</scope>
</reference>
<reference key="2">
    <citation type="journal article" date="1999" name="Genetics">
        <title>Genetic analysis of hook, a gene required for endocytic trafficking in Drosophila.</title>
        <authorList>
            <person name="Kraemer H."/>
            <person name="Phistry M."/>
        </authorList>
    </citation>
    <scope>NUCLEOTIDE SEQUENCE [GENOMIC DNA]</scope>
    <scope>FUNCTION</scope>
</reference>
<reference key="3">
    <citation type="journal article" date="2000" name="Science">
        <title>The genome sequence of Drosophila melanogaster.</title>
        <authorList>
            <person name="Adams M.D."/>
            <person name="Celniker S.E."/>
            <person name="Holt R.A."/>
            <person name="Evans C.A."/>
            <person name="Gocayne J.D."/>
            <person name="Amanatides P.G."/>
            <person name="Scherer S.E."/>
            <person name="Li P.W."/>
            <person name="Hoskins R.A."/>
            <person name="Galle R.F."/>
            <person name="George R.A."/>
            <person name="Lewis S.E."/>
            <person name="Richards S."/>
            <person name="Ashburner M."/>
            <person name="Henderson S.N."/>
            <person name="Sutton G.G."/>
            <person name="Wortman J.R."/>
            <person name="Yandell M.D."/>
            <person name="Zhang Q."/>
            <person name="Chen L.X."/>
            <person name="Brandon R.C."/>
            <person name="Rogers Y.-H.C."/>
            <person name="Blazej R.G."/>
            <person name="Champe M."/>
            <person name="Pfeiffer B.D."/>
            <person name="Wan K.H."/>
            <person name="Doyle C."/>
            <person name="Baxter E.G."/>
            <person name="Helt G."/>
            <person name="Nelson C.R."/>
            <person name="Miklos G.L.G."/>
            <person name="Abril J.F."/>
            <person name="Agbayani A."/>
            <person name="An H.-J."/>
            <person name="Andrews-Pfannkoch C."/>
            <person name="Baldwin D."/>
            <person name="Ballew R.M."/>
            <person name="Basu A."/>
            <person name="Baxendale J."/>
            <person name="Bayraktaroglu L."/>
            <person name="Beasley E.M."/>
            <person name="Beeson K.Y."/>
            <person name="Benos P.V."/>
            <person name="Berman B.P."/>
            <person name="Bhandari D."/>
            <person name="Bolshakov S."/>
            <person name="Borkova D."/>
            <person name="Botchan M.R."/>
            <person name="Bouck J."/>
            <person name="Brokstein P."/>
            <person name="Brottier P."/>
            <person name="Burtis K.C."/>
            <person name="Busam D.A."/>
            <person name="Butler H."/>
            <person name="Cadieu E."/>
            <person name="Center A."/>
            <person name="Chandra I."/>
            <person name="Cherry J.M."/>
            <person name="Cawley S."/>
            <person name="Dahlke C."/>
            <person name="Davenport L.B."/>
            <person name="Davies P."/>
            <person name="de Pablos B."/>
            <person name="Delcher A."/>
            <person name="Deng Z."/>
            <person name="Mays A.D."/>
            <person name="Dew I."/>
            <person name="Dietz S.M."/>
            <person name="Dodson K."/>
            <person name="Doup L.E."/>
            <person name="Downes M."/>
            <person name="Dugan-Rocha S."/>
            <person name="Dunkov B.C."/>
            <person name="Dunn P."/>
            <person name="Durbin K.J."/>
            <person name="Evangelista C.C."/>
            <person name="Ferraz C."/>
            <person name="Ferriera S."/>
            <person name="Fleischmann W."/>
            <person name="Fosler C."/>
            <person name="Gabrielian A.E."/>
            <person name="Garg N.S."/>
            <person name="Gelbart W.M."/>
            <person name="Glasser K."/>
            <person name="Glodek A."/>
            <person name="Gong F."/>
            <person name="Gorrell J.H."/>
            <person name="Gu Z."/>
            <person name="Guan P."/>
            <person name="Harris M."/>
            <person name="Harris N.L."/>
            <person name="Harvey D.A."/>
            <person name="Heiman T.J."/>
            <person name="Hernandez J.R."/>
            <person name="Houck J."/>
            <person name="Hostin D."/>
            <person name="Houston K.A."/>
            <person name="Howland T.J."/>
            <person name="Wei M.-H."/>
            <person name="Ibegwam C."/>
            <person name="Jalali M."/>
            <person name="Kalush F."/>
            <person name="Karpen G.H."/>
            <person name="Ke Z."/>
            <person name="Kennison J.A."/>
            <person name="Ketchum K.A."/>
            <person name="Kimmel B.E."/>
            <person name="Kodira C.D."/>
            <person name="Kraft C.L."/>
            <person name="Kravitz S."/>
            <person name="Kulp D."/>
            <person name="Lai Z."/>
            <person name="Lasko P."/>
            <person name="Lei Y."/>
            <person name="Levitsky A.A."/>
            <person name="Li J.H."/>
            <person name="Li Z."/>
            <person name="Liang Y."/>
            <person name="Lin X."/>
            <person name="Liu X."/>
            <person name="Mattei B."/>
            <person name="McIntosh T.C."/>
            <person name="McLeod M.P."/>
            <person name="McPherson D."/>
            <person name="Merkulov G."/>
            <person name="Milshina N.V."/>
            <person name="Mobarry C."/>
            <person name="Morris J."/>
            <person name="Moshrefi A."/>
            <person name="Mount S.M."/>
            <person name="Moy M."/>
            <person name="Murphy B."/>
            <person name="Murphy L."/>
            <person name="Muzny D.M."/>
            <person name="Nelson D.L."/>
            <person name="Nelson D.R."/>
            <person name="Nelson K.A."/>
            <person name="Nixon K."/>
            <person name="Nusskern D.R."/>
            <person name="Pacleb J.M."/>
            <person name="Palazzolo M."/>
            <person name="Pittman G.S."/>
            <person name="Pan S."/>
            <person name="Pollard J."/>
            <person name="Puri V."/>
            <person name="Reese M.G."/>
            <person name="Reinert K."/>
            <person name="Remington K."/>
            <person name="Saunders R.D.C."/>
            <person name="Scheeler F."/>
            <person name="Shen H."/>
            <person name="Shue B.C."/>
            <person name="Siden-Kiamos I."/>
            <person name="Simpson M."/>
            <person name="Skupski M.P."/>
            <person name="Smith T.J."/>
            <person name="Spier E."/>
            <person name="Spradling A.C."/>
            <person name="Stapleton M."/>
            <person name="Strong R."/>
            <person name="Sun E."/>
            <person name="Svirskas R."/>
            <person name="Tector C."/>
            <person name="Turner R."/>
            <person name="Venter E."/>
            <person name="Wang A.H."/>
            <person name="Wang X."/>
            <person name="Wang Z.-Y."/>
            <person name="Wassarman D.A."/>
            <person name="Weinstock G.M."/>
            <person name="Weissenbach J."/>
            <person name="Williams S.M."/>
            <person name="Woodage T."/>
            <person name="Worley K.C."/>
            <person name="Wu D."/>
            <person name="Yang S."/>
            <person name="Yao Q.A."/>
            <person name="Ye J."/>
            <person name="Yeh R.-F."/>
            <person name="Zaveri J.S."/>
            <person name="Zhan M."/>
            <person name="Zhang G."/>
            <person name="Zhao Q."/>
            <person name="Zheng L."/>
            <person name="Zheng X.H."/>
            <person name="Zhong F.N."/>
            <person name="Zhong W."/>
            <person name="Zhou X."/>
            <person name="Zhu S.C."/>
            <person name="Zhu X."/>
            <person name="Smith H.O."/>
            <person name="Gibbs R.A."/>
            <person name="Myers E.W."/>
            <person name="Rubin G.M."/>
            <person name="Venter J.C."/>
        </authorList>
    </citation>
    <scope>NUCLEOTIDE SEQUENCE [LARGE SCALE GENOMIC DNA]</scope>
    <source>
        <strain>Berkeley</strain>
    </source>
</reference>
<reference key="4">
    <citation type="journal article" date="2002" name="Genome Biol.">
        <title>Annotation of the Drosophila melanogaster euchromatic genome: a systematic review.</title>
        <authorList>
            <person name="Misra S."/>
            <person name="Crosby M.A."/>
            <person name="Mungall C.J."/>
            <person name="Matthews B.B."/>
            <person name="Campbell K.S."/>
            <person name="Hradecky P."/>
            <person name="Huang Y."/>
            <person name="Kaminker J.S."/>
            <person name="Millburn G.H."/>
            <person name="Prochnik S.E."/>
            <person name="Smith C.D."/>
            <person name="Tupy J.L."/>
            <person name="Whitfield E.J."/>
            <person name="Bayraktaroglu L."/>
            <person name="Berman B.P."/>
            <person name="Bettencourt B.R."/>
            <person name="Celniker S.E."/>
            <person name="de Grey A.D.N.J."/>
            <person name="Drysdale R.A."/>
            <person name="Harris N.L."/>
            <person name="Richter J."/>
            <person name="Russo S."/>
            <person name="Schroeder A.J."/>
            <person name="Shu S.Q."/>
            <person name="Stapleton M."/>
            <person name="Yamada C."/>
            <person name="Ashburner M."/>
            <person name="Gelbart W.M."/>
            <person name="Rubin G.M."/>
            <person name="Lewis S.E."/>
        </authorList>
    </citation>
    <scope>GENOME REANNOTATION</scope>
    <source>
        <strain>Berkeley</strain>
    </source>
</reference>
<reference key="5">
    <citation type="journal article" date="2002" name="Genome Biol.">
        <title>A Drosophila full-length cDNA resource.</title>
        <authorList>
            <person name="Stapleton M."/>
            <person name="Carlson J.W."/>
            <person name="Brokstein P."/>
            <person name="Yu C."/>
            <person name="Champe M."/>
            <person name="George R.A."/>
            <person name="Guarin H."/>
            <person name="Kronmiller B."/>
            <person name="Pacleb J.M."/>
            <person name="Park S."/>
            <person name="Wan K.H."/>
            <person name="Rubin G.M."/>
            <person name="Celniker S.E."/>
        </authorList>
    </citation>
    <scope>NUCLEOTIDE SEQUENCE [LARGE SCALE MRNA]</scope>
    <source>
        <strain>Berkeley</strain>
        <tissue>Embryo</tissue>
    </source>
</reference>
<reference key="6">
    <citation type="journal article" date="1999" name="Mol. Biol. Cell">
        <title>Genetic dissection of endocytic trafficking in Drosophila using a horseradish peroxidase-bride of sevenless chimera: hook is required for normal maturation of multivesicular endosomes.</title>
        <authorList>
            <person name="Sunio A."/>
            <person name="Metcalf A.B."/>
            <person name="Kraemer H."/>
        </authorList>
    </citation>
    <scope>FUNCTION</scope>
</reference>
<reference key="7">
    <citation type="journal article" date="2000" name="J. Neurobiol.">
        <title>Drosophila endosomal proteins hook and deep orange regulate synapse size but not synaptic vesicle recycling.</title>
        <authorList>
            <person name="Narayanan R."/>
            <person name="Kraemer H."/>
            <person name="Ramaswami M."/>
        </authorList>
    </citation>
    <scope>FUNCTION</scope>
    <scope>SUBCELLULAR LOCATION</scope>
</reference>
<reference key="8">
    <citation type="journal article" date="2001" name="J. Cell Biol.">
        <title>The Golgi-associated hook3 protein is a member of a novel family of microtubule-binding proteins.</title>
        <authorList>
            <person name="Walenta J.H."/>
            <person name="Didier A.J."/>
            <person name="Liu X."/>
            <person name="Kraemer H."/>
        </authorList>
    </citation>
    <scope>INTERACTION WITH MICROTUBULES</scope>
</reference>
<reference key="9">
    <citation type="journal article" date="2007" name="Genetics">
        <title>Genetic modifiers of the Drosophila blue cheese gene link defects in lysosomal transport with decreased life span and altered ubiquitinated-protein profiles.</title>
        <authorList>
            <person name="Simonsen A."/>
            <person name="Cumming R.C."/>
            <person name="Lindmo K."/>
            <person name="Galaviz V."/>
            <person name="Cheng S."/>
            <person name="Rusten T.E."/>
            <person name="Finley K.D."/>
        </authorList>
    </citation>
    <scope>FUNCTION</scope>
    <scope>DISRUPTION PHENOTYPE</scope>
</reference>
<proteinExistence type="evidence at protein level"/>
<dbReference type="EMBL" id="U48362">
    <property type="protein sequence ID" value="AAC47261.1"/>
    <property type="molecule type" value="mRNA"/>
</dbReference>
<dbReference type="EMBL" id="AF044925">
    <property type="protein sequence ID" value="AAC09300.1"/>
    <property type="molecule type" value="Genomic_DNA"/>
</dbReference>
<dbReference type="EMBL" id="AE014134">
    <property type="protein sequence ID" value="AAF53742.1"/>
    <property type="molecule type" value="Genomic_DNA"/>
</dbReference>
<dbReference type="EMBL" id="AY069337">
    <property type="protein sequence ID" value="AAL39482.1"/>
    <property type="molecule type" value="mRNA"/>
</dbReference>
<dbReference type="RefSeq" id="NP_476573.1">
    <property type="nucleotide sequence ID" value="NM_057225.4"/>
</dbReference>
<dbReference type="SMR" id="Q24185"/>
<dbReference type="BioGRID" id="61158">
    <property type="interactions" value="25"/>
</dbReference>
<dbReference type="FunCoup" id="Q24185">
    <property type="interactions" value="515"/>
</dbReference>
<dbReference type="IntAct" id="Q24185">
    <property type="interactions" value="8"/>
</dbReference>
<dbReference type="STRING" id="7227.FBpp0080722"/>
<dbReference type="PaxDb" id="7227-FBpp0080722"/>
<dbReference type="EnsemblMetazoa" id="FBtr0081180">
    <property type="protein sequence ID" value="FBpp0080722"/>
    <property type="gene ID" value="FBgn0001202"/>
</dbReference>
<dbReference type="GeneID" id="35169"/>
<dbReference type="KEGG" id="dme:Dmel_CG10653"/>
<dbReference type="UCSC" id="CG10653-RA">
    <property type="organism name" value="d. melanogaster"/>
</dbReference>
<dbReference type="AGR" id="FB:FBgn0001202"/>
<dbReference type="CTD" id="35169"/>
<dbReference type="FlyBase" id="FBgn0001202">
    <property type="gene designation" value="hook"/>
</dbReference>
<dbReference type="VEuPathDB" id="VectorBase:FBgn0001202"/>
<dbReference type="eggNOG" id="ENOG502QQM8">
    <property type="taxonomic scope" value="Eukaryota"/>
</dbReference>
<dbReference type="GeneTree" id="ENSGT00940000167690"/>
<dbReference type="HOGENOM" id="CLU_011214_1_0_1"/>
<dbReference type="InParanoid" id="Q24185"/>
<dbReference type="OMA" id="DAKYRKC"/>
<dbReference type="OrthoDB" id="49395at2759"/>
<dbReference type="PhylomeDB" id="Q24185"/>
<dbReference type="SignaLink" id="Q24185"/>
<dbReference type="BioGRID-ORCS" id="35169">
    <property type="hits" value="0 hits in 3 CRISPR screens"/>
</dbReference>
<dbReference type="GenomeRNAi" id="35169"/>
<dbReference type="PRO" id="PR:Q24185"/>
<dbReference type="Proteomes" id="UP000000803">
    <property type="component" value="Chromosome 2L"/>
</dbReference>
<dbReference type="Bgee" id="FBgn0001202">
    <property type="expression patterns" value="Expressed in distal medullary amacrine neuron Dm9 in brain and 208 other cell types or tissues"/>
</dbReference>
<dbReference type="GO" id="GO:0005813">
    <property type="term" value="C:centrosome"/>
    <property type="evidence" value="ECO:0000318"/>
    <property type="project" value="GO_Central"/>
</dbReference>
<dbReference type="GO" id="GO:0005737">
    <property type="term" value="C:cytoplasm"/>
    <property type="evidence" value="ECO:0000318"/>
    <property type="project" value="GO_Central"/>
</dbReference>
<dbReference type="GO" id="GO:0005768">
    <property type="term" value="C:endosome"/>
    <property type="evidence" value="ECO:0000314"/>
    <property type="project" value="UniProtKB"/>
</dbReference>
<dbReference type="GO" id="GO:0005874">
    <property type="term" value="C:microtubule"/>
    <property type="evidence" value="ECO:0007669"/>
    <property type="project" value="UniProtKB-KW"/>
</dbReference>
<dbReference type="GO" id="GO:0045202">
    <property type="term" value="C:synapse"/>
    <property type="evidence" value="ECO:0000315"/>
    <property type="project" value="FlyBase"/>
</dbReference>
<dbReference type="GO" id="GO:0051959">
    <property type="term" value="F:dynein light intermediate chain binding"/>
    <property type="evidence" value="ECO:0000318"/>
    <property type="project" value="GO_Central"/>
</dbReference>
<dbReference type="GO" id="GO:0008017">
    <property type="term" value="F:microtubule binding"/>
    <property type="evidence" value="ECO:0000314"/>
    <property type="project" value="UniProtKB"/>
</dbReference>
<dbReference type="GO" id="GO:0031267">
    <property type="term" value="F:small GTPase binding"/>
    <property type="evidence" value="ECO:0000353"/>
    <property type="project" value="FlyBase"/>
</dbReference>
<dbReference type="GO" id="GO:0031122">
    <property type="term" value="P:cytoplasmic microtubule organization"/>
    <property type="evidence" value="ECO:0000318"/>
    <property type="project" value="GO_Central"/>
</dbReference>
<dbReference type="GO" id="GO:0030705">
    <property type="term" value="P:cytoskeleton-dependent intracellular transport"/>
    <property type="evidence" value="ECO:0000314"/>
    <property type="project" value="UniProtKB"/>
</dbReference>
<dbReference type="GO" id="GO:0008340">
    <property type="term" value="P:determination of adult lifespan"/>
    <property type="evidence" value="ECO:0000315"/>
    <property type="project" value="FlyBase"/>
</dbReference>
<dbReference type="GO" id="GO:0006897">
    <property type="term" value="P:endocytosis"/>
    <property type="evidence" value="ECO:0000315"/>
    <property type="project" value="FlyBase"/>
</dbReference>
<dbReference type="CDD" id="cd22222">
    <property type="entry name" value="HkD_Hook"/>
    <property type="match status" value="1"/>
</dbReference>
<dbReference type="FunFam" id="1.10.418.10:FF:000024">
    <property type="entry name" value="Hook homolog 3 (Drosophila)"/>
    <property type="match status" value="1"/>
</dbReference>
<dbReference type="Gene3D" id="1.10.418.10">
    <property type="entry name" value="Calponin-like domain"/>
    <property type="match status" value="1"/>
</dbReference>
<dbReference type="InterPro" id="IPR001715">
    <property type="entry name" value="CH_dom"/>
</dbReference>
<dbReference type="InterPro" id="IPR036872">
    <property type="entry name" value="CH_dom_sf"/>
</dbReference>
<dbReference type="InterPro" id="IPR008636">
    <property type="entry name" value="Hook_C"/>
</dbReference>
<dbReference type="InterPro" id="IPR043936">
    <property type="entry name" value="HOOK_N"/>
</dbReference>
<dbReference type="PANTHER" id="PTHR18947">
    <property type="entry name" value="HOOK PROTEINS"/>
    <property type="match status" value="1"/>
</dbReference>
<dbReference type="PANTHER" id="PTHR18947:SF39">
    <property type="entry name" value="PROTEIN HOOK"/>
    <property type="match status" value="1"/>
</dbReference>
<dbReference type="Pfam" id="PF05622">
    <property type="entry name" value="HOOK"/>
    <property type="match status" value="1"/>
</dbReference>
<dbReference type="Pfam" id="PF19047">
    <property type="entry name" value="HOOK_N"/>
    <property type="match status" value="1"/>
</dbReference>
<dbReference type="SUPFAM" id="SSF116907">
    <property type="entry name" value="Hook domain"/>
    <property type="match status" value="1"/>
</dbReference>
<dbReference type="PROSITE" id="PS50021">
    <property type="entry name" value="CH"/>
    <property type="match status" value="1"/>
</dbReference>
<protein>
    <recommendedName>
        <fullName>Protein hook</fullName>
    </recommendedName>
    <alternativeName>
        <fullName>dHK</fullName>
    </alternativeName>
</protein>
<keyword id="KW-0175">Coiled coil</keyword>
<keyword id="KW-0963">Cytoplasm</keyword>
<keyword id="KW-0206">Cytoskeleton</keyword>
<keyword id="KW-0217">Developmental protein</keyword>
<keyword id="KW-0254">Endocytosis</keyword>
<keyword id="KW-0967">Endosome</keyword>
<keyword id="KW-0493">Microtubule</keyword>
<keyword id="KW-1185">Reference proteome</keyword>
<keyword id="KW-0770">Synapse</keyword>
<sequence>MSAPKNEMYYSLLEWFKTLNLNAPHADAESLADGVALAQALNQFAPESFTDAWLSKIKASAVGSNWRLRMSNLKKVTQSVYDYYSDVLNYSLSDFSKPDLQRIAEKCDLGELERLLQLVLGCAVNCAEKQSYITEIMCLEEELQANIMRALQELEATRQASTPEGGVASSLSRGSRTGLLDSKAVQEDRDALAQKCFETEKKMLLLIDEKTNLQQELHKLQQEFARLEQHSTVIGDDGVSLGPVQTGSVRYNELRRQLDLLKEELLQSEGAREDLKIKAQQQDTDLLHMQMRIEELMKSSAEVTTLKDEVDVLRESNDKLKICEAQLDTYKKKLEDYNDLKKQVKILEERSADYVQQNAQFEEDAKRYANTKGQVELFKKEIQDLHAKLDAESSKNVKLEFDNKNLESKNLALQRAKDSLLKERDNLREAVDELKCGQLSSNTALTGTTVSRELQPSATVEKLQRLEAENKALREGQGGQTALAQLLDDANKRCENLREQLKTANERILSLSHASQSDDPILKESEFGKQIKQLMELNEQKTLQLEEAVTQSTSLQCKVTQLETNLSAREQEILVYDAKYRKCVEKAKEVIKSIDPRIASALDASVLEKSADLVEEEPKPKMSVMEEQLMTSAFYRLGVNAQRDAIDSKLAILMGSGQTFLARQRQSAPRKSLSAMKSK</sequence>
<comment type="function">
    <text evidence="4 5 7 8 9">Involved in endocytic trafficking by stabilizing organelles of the endocytic pathway. Probably acts as a cytoskeletal linker protein required to tether endosome vesicles to the cytoskeleton. Involved in modulation of endocytosis at stages required for down-regulation of membrane proteins that control synapse size. Not involved in synaptic vesicle recycling. Required in R7 cells for boss endocytosis into multivesicular bodies (MVBs). Has a role in regulating adult longevity.</text>
</comment>
<comment type="subunit">
    <text evidence="6">Homodimer. Interacts with microtubules via its N-terminus.</text>
</comment>
<comment type="subcellular location">
    <subcellularLocation>
        <location>Cytoplasm</location>
        <location>Cytoskeleton</location>
    </subcellularLocation>
    <subcellularLocation>
        <location evidence="8">Endosome</location>
    </subcellularLocation>
    <subcellularLocation>
        <location evidence="5">Synapse</location>
    </subcellularLocation>
    <text evidence="5">Enriched at neuromuscular synapses, in both presynaptic and postsynaptic regions.</text>
</comment>
<comment type="domain">
    <text evidence="8">The coiled coil domain mediates homodimerization.</text>
</comment>
<comment type="disruption phenotype">
    <text evidence="7">Life span reduction.</text>
</comment>
<comment type="similarity">
    <text evidence="10">Belongs to the hook family.</text>
</comment>
<organism>
    <name type="scientific">Drosophila melanogaster</name>
    <name type="common">Fruit fly</name>
    <dbReference type="NCBI Taxonomy" id="7227"/>
    <lineage>
        <taxon>Eukaryota</taxon>
        <taxon>Metazoa</taxon>
        <taxon>Ecdysozoa</taxon>
        <taxon>Arthropoda</taxon>
        <taxon>Hexapoda</taxon>
        <taxon>Insecta</taxon>
        <taxon>Pterygota</taxon>
        <taxon>Neoptera</taxon>
        <taxon>Endopterygota</taxon>
        <taxon>Diptera</taxon>
        <taxon>Brachycera</taxon>
        <taxon>Muscomorpha</taxon>
        <taxon>Ephydroidea</taxon>
        <taxon>Drosophilidae</taxon>
        <taxon>Drosophila</taxon>
        <taxon>Sophophora</taxon>
    </lineage>
</organism>
<accession>Q24185</accession>
<accession>Q9VJ15</accession>
<gene>
    <name evidence="11" type="primary">hook</name>
    <name evidence="11" type="synonym">hk</name>
    <name evidence="11" type="ORF">CG10653</name>
</gene>
<evidence type="ECO:0000250" key="1"/>
<evidence type="ECO:0000255" key="2"/>
<evidence type="ECO:0000255" key="3">
    <source>
        <dbReference type="PROSITE-ProRule" id="PRU00044"/>
    </source>
</evidence>
<evidence type="ECO:0000269" key="4">
    <source>
    </source>
</evidence>
<evidence type="ECO:0000269" key="5">
    <source>
    </source>
</evidence>
<evidence type="ECO:0000269" key="6">
    <source>
    </source>
</evidence>
<evidence type="ECO:0000269" key="7">
    <source>
    </source>
</evidence>
<evidence type="ECO:0000269" key="8">
    <source>
    </source>
</evidence>
<evidence type="ECO:0000269" key="9">
    <source>
    </source>
</evidence>
<evidence type="ECO:0000305" key="10"/>
<evidence type="ECO:0000312" key="11">
    <source>
        <dbReference type="FlyBase" id="FBgn0001202"/>
    </source>
</evidence>
<name>HOOK_DROME</name>